<gene>
    <name evidence="3" type="ordered locus">YER046W-A</name>
</gene>
<comment type="miscellaneous">
    <text evidence="1">Partially overlaps SAP1.</text>
</comment>
<comment type="caution">
    <text evidence="2">Product of a dubious gene prediction unlikely to encode a functional protein. Because of that it is not part of the S.cerevisiae S288c complete/reference proteome set.</text>
</comment>
<evidence type="ECO:0000305" key="1"/>
<evidence type="ECO:0000305" key="2">
    <source>
    </source>
</evidence>
<evidence type="ECO:0000312" key="3">
    <source>
        <dbReference type="SGD" id="S000028747"/>
    </source>
</evidence>
<accession>A0A023PZF5</accession>
<dbReference type="EMBL" id="KJ412229">
    <property type="protein sequence ID" value="AHX39272.1"/>
    <property type="molecule type" value="Genomic_DNA"/>
</dbReference>
<dbReference type="STRING" id="4932.YER046W-A"/>
<dbReference type="PaxDb" id="4932-YER046W-A"/>
<dbReference type="EnsemblFungi" id="YER046W-A_mRNA">
    <property type="protein sequence ID" value="YER046W-A"/>
    <property type="gene ID" value="YER046W-A"/>
</dbReference>
<dbReference type="AGR" id="SGD:S000028747"/>
<dbReference type="SGD" id="S000028747">
    <property type="gene designation" value="YER046W-A"/>
</dbReference>
<dbReference type="HOGENOM" id="CLU_2186030_0_0_1"/>
<dbReference type="ChiTaRS" id="YER046W-A">
    <property type="organism name" value="yeast"/>
</dbReference>
<sequence length="109" mass="12723">MQNIFYRSAYVHTVCPARLEYYLLLPLLLYYYYYYHHHEPDDPNCEAHFSYFTNPSWDTEGLIYTKLFLKSTRPMGLIISLSVSNNLSPRSRSGPMAASFAKDVISLPE</sequence>
<reference key="1">
    <citation type="journal article" date="1997" name="Nature">
        <title>The nucleotide sequence of Saccharomyces cerevisiae chromosome V.</title>
        <authorList>
            <person name="Dietrich F.S."/>
            <person name="Mulligan J.T."/>
            <person name="Hennessy K.M."/>
            <person name="Yelton M.A."/>
            <person name="Allen E."/>
            <person name="Araujo R."/>
            <person name="Aviles E."/>
            <person name="Berno A."/>
            <person name="Brennan T."/>
            <person name="Carpenter J."/>
            <person name="Chen E."/>
            <person name="Cherry J.M."/>
            <person name="Chung E."/>
            <person name="Duncan M."/>
            <person name="Guzman E."/>
            <person name="Hartzell G."/>
            <person name="Hunicke-Smith S."/>
            <person name="Hyman R.W."/>
            <person name="Kayser A."/>
            <person name="Komp C."/>
            <person name="Lashkari D."/>
            <person name="Lew H."/>
            <person name="Lin D."/>
            <person name="Mosedale D."/>
            <person name="Nakahara K."/>
            <person name="Namath A."/>
            <person name="Norgren R."/>
            <person name="Oefner P."/>
            <person name="Oh C."/>
            <person name="Petel F.X."/>
            <person name="Roberts D."/>
            <person name="Sehl P."/>
            <person name="Schramm S."/>
            <person name="Shogren T."/>
            <person name="Smith V."/>
            <person name="Taylor P."/>
            <person name="Wei Y."/>
            <person name="Botstein D."/>
            <person name="Davis R.W."/>
        </authorList>
    </citation>
    <scope>NUCLEOTIDE SEQUENCE [LARGE SCALE GENOMIC DNA]</scope>
    <source>
        <strain>ATCC 204508 / S288c</strain>
    </source>
</reference>
<reference key="2">
    <citation type="journal article" date="2014" name="G3 (Bethesda)">
        <title>The reference genome sequence of Saccharomyces cerevisiae: Then and now.</title>
        <authorList>
            <person name="Engel S.R."/>
            <person name="Dietrich F.S."/>
            <person name="Fisk D.G."/>
            <person name="Binkley G."/>
            <person name="Balakrishnan R."/>
            <person name="Costanzo M.C."/>
            <person name="Dwight S.S."/>
            <person name="Hitz B.C."/>
            <person name="Karra K."/>
            <person name="Nash R.S."/>
            <person name="Weng S."/>
            <person name="Wong E.D."/>
            <person name="Lloyd P."/>
            <person name="Skrzypek M.S."/>
            <person name="Miyasato S.R."/>
            <person name="Simison M."/>
            <person name="Cherry J.M."/>
        </authorList>
    </citation>
    <scope>GENOME REANNOTATION</scope>
    <source>
        <strain>ATCC 204508 / S288c</strain>
    </source>
</reference>
<protein>
    <recommendedName>
        <fullName evidence="1">Putative uncharacterized protein YER046W-A</fullName>
    </recommendedName>
</protein>
<feature type="chain" id="PRO_0000430992" description="Putative uncharacterized protein YER046W-A">
    <location>
        <begin position="1"/>
        <end position="109"/>
    </location>
</feature>
<proteinExistence type="uncertain"/>
<organism>
    <name type="scientific">Saccharomyces cerevisiae (strain ATCC 204508 / S288c)</name>
    <name type="common">Baker's yeast</name>
    <dbReference type="NCBI Taxonomy" id="559292"/>
    <lineage>
        <taxon>Eukaryota</taxon>
        <taxon>Fungi</taxon>
        <taxon>Dikarya</taxon>
        <taxon>Ascomycota</taxon>
        <taxon>Saccharomycotina</taxon>
        <taxon>Saccharomycetes</taxon>
        <taxon>Saccharomycetales</taxon>
        <taxon>Saccharomycetaceae</taxon>
        <taxon>Saccharomyces</taxon>
    </lineage>
</organism>
<name>YE046_YEAST</name>